<comment type="function">
    <text evidence="1">Catalyzes the conversion of D-ribulose 5-phosphate to formate and 3,4-dihydroxy-2-butanone 4-phosphate.</text>
</comment>
<comment type="catalytic activity">
    <reaction evidence="1">
        <text>D-ribulose 5-phosphate = (2S)-2-hydroxy-3-oxobutyl phosphate + formate + H(+)</text>
        <dbReference type="Rhea" id="RHEA:18457"/>
        <dbReference type="ChEBI" id="CHEBI:15378"/>
        <dbReference type="ChEBI" id="CHEBI:15740"/>
        <dbReference type="ChEBI" id="CHEBI:58121"/>
        <dbReference type="ChEBI" id="CHEBI:58830"/>
        <dbReference type="EC" id="4.1.99.12"/>
    </reaction>
</comment>
<comment type="cofactor">
    <cofactor evidence="1">
        <name>Mg(2+)</name>
        <dbReference type="ChEBI" id="CHEBI:18420"/>
    </cofactor>
    <cofactor evidence="1">
        <name>Mn(2+)</name>
        <dbReference type="ChEBI" id="CHEBI:29035"/>
    </cofactor>
    <text evidence="1">Binds 2 divalent metal cations per subunit. Magnesium or manganese.</text>
</comment>
<comment type="pathway">
    <text evidence="1">Cofactor biosynthesis; riboflavin biosynthesis; 2-hydroxy-3-oxobutyl phosphate from D-ribulose 5-phosphate: step 1/1.</text>
</comment>
<comment type="subunit">
    <text evidence="1">Homodimer.</text>
</comment>
<comment type="similarity">
    <text evidence="1">Belongs to the DHBP synthase family.</text>
</comment>
<sequence length="212" mass="22833">MNQSLLAPYGNAIERVNAALTALREGKGVLVVDDEDRENEGDLIYSAETLTNEQMALLIRECSGIVCLCLTDERITQLELPPMVVDNNSQYGTAFTVSIEAKEGVTTGVSAADRVTTVKAAIADGAKPGDLARPGHVYPLRARPGGVLERRGHTEGTVDLMKLAGLKPFGVLCEVTLPDGTMARLPEIVEFGQQHNMPVLTIEDIVAYRNSQ</sequence>
<protein>
    <recommendedName>
        <fullName evidence="1">3,4-dihydroxy-2-butanone 4-phosphate synthase</fullName>
        <shortName evidence="1">DHBP synthase</shortName>
        <ecNumber evidence="1">4.1.99.12</ecNumber>
    </recommendedName>
</protein>
<gene>
    <name evidence="1" type="primary">ribB</name>
    <name type="ordered locus">swp_0169</name>
</gene>
<reference key="1">
    <citation type="journal article" date="2008" name="PLoS ONE">
        <title>Environmental adaptation: genomic analysis of the piezotolerant and psychrotolerant deep-sea iron reducing bacterium Shewanella piezotolerans WP3.</title>
        <authorList>
            <person name="Wang F."/>
            <person name="Wang J."/>
            <person name="Jian H."/>
            <person name="Zhang B."/>
            <person name="Li S."/>
            <person name="Wang F."/>
            <person name="Zeng X."/>
            <person name="Gao L."/>
            <person name="Bartlett D.H."/>
            <person name="Yu J."/>
            <person name="Hu S."/>
            <person name="Xiao X."/>
        </authorList>
    </citation>
    <scope>NUCLEOTIDE SEQUENCE [LARGE SCALE GENOMIC DNA]</scope>
    <source>
        <strain>WP3 / JCM 13877</strain>
    </source>
</reference>
<keyword id="KW-0456">Lyase</keyword>
<keyword id="KW-0460">Magnesium</keyword>
<keyword id="KW-0464">Manganese</keyword>
<keyword id="KW-0479">Metal-binding</keyword>
<keyword id="KW-0686">Riboflavin biosynthesis</keyword>
<dbReference type="EC" id="4.1.99.12" evidence="1"/>
<dbReference type="EMBL" id="CP000472">
    <property type="protein sequence ID" value="ACJ27012.1"/>
    <property type="molecule type" value="Genomic_DNA"/>
</dbReference>
<dbReference type="RefSeq" id="WP_020910396.1">
    <property type="nucleotide sequence ID" value="NC_011566.1"/>
</dbReference>
<dbReference type="SMR" id="B8CH19"/>
<dbReference type="STRING" id="225849.swp_0169"/>
<dbReference type="KEGG" id="swp:swp_0169"/>
<dbReference type="eggNOG" id="COG0108">
    <property type="taxonomic scope" value="Bacteria"/>
</dbReference>
<dbReference type="HOGENOM" id="CLU_020273_3_0_6"/>
<dbReference type="OrthoDB" id="9793111at2"/>
<dbReference type="UniPathway" id="UPA00275">
    <property type="reaction ID" value="UER00399"/>
</dbReference>
<dbReference type="Proteomes" id="UP000000753">
    <property type="component" value="Chromosome"/>
</dbReference>
<dbReference type="GO" id="GO:0005829">
    <property type="term" value="C:cytosol"/>
    <property type="evidence" value="ECO:0007669"/>
    <property type="project" value="TreeGrafter"/>
</dbReference>
<dbReference type="GO" id="GO:0008686">
    <property type="term" value="F:3,4-dihydroxy-2-butanone-4-phosphate synthase activity"/>
    <property type="evidence" value="ECO:0007669"/>
    <property type="project" value="UniProtKB-UniRule"/>
</dbReference>
<dbReference type="GO" id="GO:0000287">
    <property type="term" value="F:magnesium ion binding"/>
    <property type="evidence" value="ECO:0007669"/>
    <property type="project" value="UniProtKB-UniRule"/>
</dbReference>
<dbReference type="GO" id="GO:0030145">
    <property type="term" value="F:manganese ion binding"/>
    <property type="evidence" value="ECO:0007669"/>
    <property type="project" value="UniProtKB-UniRule"/>
</dbReference>
<dbReference type="GO" id="GO:0009231">
    <property type="term" value="P:riboflavin biosynthetic process"/>
    <property type="evidence" value="ECO:0007669"/>
    <property type="project" value="UniProtKB-UniRule"/>
</dbReference>
<dbReference type="FunFam" id="3.90.870.10:FF:000002">
    <property type="entry name" value="3,4-dihydroxy-2-butanone 4-phosphate synthase"/>
    <property type="match status" value="1"/>
</dbReference>
<dbReference type="Gene3D" id="3.90.870.10">
    <property type="entry name" value="DHBP synthase"/>
    <property type="match status" value="1"/>
</dbReference>
<dbReference type="HAMAP" id="MF_00180">
    <property type="entry name" value="RibB"/>
    <property type="match status" value="1"/>
</dbReference>
<dbReference type="InterPro" id="IPR017945">
    <property type="entry name" value="DHBP_synth_RibB-like_a/b_dom"/>
</dbReference>
<dbReference type="InterPro" id="IPR000422">
    <property type="entry name" value="DHBP_synthase_RibB"/>
</dbReference>
<dbReference type="NCBIfam" id="TIGR00506">
    <property type="entry name" value="ribB"/>
    <property type="match status" value="1"/>
</dbReference>
<dbReference type="PANTHER" id="PTHR21327:SF38">
    <property type="entry name" value="3,4-DIHYDROXY-2-BUTANONE 4-PHOSPHATE SYNTHASE"/>
    <property type="match status" value="1"/>
</dbReference>
<dbReference type="PANTHER" id="PTHR21327">
    <property type="entry name" value="GTP CYCLOHYDROLASE II-RELATED"/>
    <property type="match status" value="1"/>
</dbReference>
<dbReference type="Pfam" id="PF00926">
    <property type="entry name" value="DHBP_synthase"/>
    <property type="match status" value="1"/>
</dbReference>
<dbReference type="SUPFAM" id="SSF55821">
    <property type="entry name" value="YrdC/RibB"/>
    <property type="match status" value="1"/>
</dbReference>
<organism>
    <name type="scientific">Shewanella piezotolerans (strain WP3 / JCM 13877)</name>
    <dbReference type="NCBI Taxonomy" id="225849"/>
    <lineage>
        <taxon>Bacteria</taxon>
        <taxon>Pseudomonadati</taxon>
        <taxon>Pseudomonadota</taxon>
        <taxon>Gammaproteobacteria</taxon>
        <taxon>Alteromonadales</taxon>
        <taxon>Shewanellaceae</taxon>
        <taxon>Shewanella</taxon>
    </lineage>
</organism>
<name>RIBB_SHEPW</name>
<proteinExistence type="inferred from homology"/>
<evidence type="ECO:0000255" key="1">
    <source>
        <dbReference type="HAMAP-Rule" id="MF_00180"/>
    </source>
</evidence>
<accession>B8CH19</accession>
<feature type="chain" id="PRO_1000118441" description="3,4-dihydroxy-2-butanone 4-phosphate synthase">
    <location>
        <begin position="1"/>
        <end position="212"/>
    </location>
</feature>
<feature type="binding site" evidence="1">
    <location>
        <begin position="37"/>
        <end position="38"/>
    </location>
    <ligand>
        <name>D-ribulose 5-phosphate</name>
        <dbReference type="ChEBI" id="CHEBI:58121"/>
    </ligand>
</feature>
<feature type="binding site" evidence="1">
    <location>
        <position position="38"/>
    </location>
    <ligand>
        <name>Mg(2+)</name>
        <dbReference type="ChEBI" id="CHEBI:18420"/>
        <label>1</label>
    </ligand>
</feature>
<feature type="binding site" evidence="1">
    <location>
        <position position="38"/>
    </location>
    <ligand>
        <name>Mg(2+)</name>
        <dbReference type="ChEBI" id="CHEBI:18420"/>
        <label>2</label>
    </ligand>
</feature>
<feature type="binding site" evidence="1">
    <location>
        <position position="42"/>
    </location>
    <ligand>
        <name>D-ribulose 5-phosphate</name>
        <dbReference type="ChEBI" id="CHEBI:58121"/>
    </ligand>
</feature>
<feature type="binding site" evidence="1">
    <location>
        <begin position="150"/>
        <end position="154"/>
    </location>
    <ligand>
        <name>D-ribulose 5-phosphate</name>
        <dbReference type="ChEBI" id="CHEBI:58121"/>
    </ligand>
</feature>
<feature type="binding site" evidence="1">
    <location>
        <position position="153"/>
    </location>
    <ligand>
        <name>Mg(2+)</name>
        <dbReference type="ChEBI" id="CHEBI:18420"/>
        <label>2</label>
    </ligand>
</feature>
<feature type="binding site" evidence="1">
    <location>
        <position position="174"/>
    </location>
    <ligand>
        <name>D-ribulose 5-phosphate</name>
        <dbReference type="ChEBI" id="CHEBI:58121"/>
    </ligand>
</feature>
<feature type="site" description="Essential for catalytic activity" evidence="1">
    <location>
        <position position="136"/>
    </location>
</feature>
<feature type="site" description="Essential for catalytic activity" evidence="1">
    <location>
        <position position="174"/>
    </location>
</feature>